<keyword id="KW-0067">ATP-binding</keyword>
<keyword id="KW-0173">Coenzyme A biosynthesis</keyword>
<keyword id="KW-0963">Cytoplasm</keyword>
<keyword id="KW-0418">Kinase</keyword>
<keyword id="KW-0547">Nucleotide-binding</keyword>
<keyword id="KW-1185">Reference proteome</keyword>
<keyword id="KW-0808">Transferase</keyword>
<sequence length="207" mass="22374">MTRSPAPSSPTHPRRLGLTGSIGAGKSTVARLLRERGLTVLDADAEARWVTEQPEVLTELNEAFPGVVTGGTLDRAGLAARVFSDPAQVARLNAITHPRVRARMEALEAAATARGEHWVVQDIPLLFEGGLERGMDAVLVVDAPLELRLERALARGGLTREDILARDARQLSSEEKRRRATIVLDNSGPLEALEGQLDAALRQLEIT</sequence>
<dbReference type="EC" id="2.7.1.24" evidence="1"/>
<dbReference type="EMBL" id="AE000513">
    <property type="protein sequence ID" value="AAF11446.1"/>
    <property type="molecule type" value="Genomic_DNA"/>
</dbReference>
<dbReference type="PIR" id="D75341">
    <property type="entry name" value="D75341"/>
</dbReference>
<dbReference type="RefSeq" id="NP_295615.1">
    <property type="nucleotide sequence ID" value="NC_001263.1"/>
</dbReference>
<dbReference type="RefSeq" id="WP_010888527.1">
    <property type="nucleotide sequence ID" value="NC_001263.1"/>
</dbReference>
<dbReference type="SMR" id="Q9RT73"/>
<dbReference type="FunCoup" id="Q9RT73">
    <property type="interactions" value="419"/>
</dbReference>
<dbReference type="STRING" id="243230.DR_1892"/>
<dbReference type="PaxDb" id="243230-DR_1892"/>
<dbReference type="EnsemblBacteria" id="AAF11446">
    <property type="protein sequence ID" value="AAF11446"/>
    <property type="gene ID" value="DR_1892"/>
</dbReference>
<dbReference type="GeneID" id="69518131"/>
<dbReference type="KEGG" id="dra:DR_1892"/>
<dbReference type="PATRIC" id="fig|243230.17.peg.2106"/>
<dbReference type="eggNOG" id="COG0237">
    <property type="taxonomic scope" value="Bacteria"/>
</dbReference>
<dbReference type="HOGENOM" id="CLU_057180_1_1_0"/>
<dbReference type="InParanoid" id="Q9RT73"/>
<dbReference type="OrthoDB" id="9812943at2"/>
<dbReference type="UniPathway" id="UPA00241">
    <property type="reaction ID" value="UER00356"/>
</dbReference>
<dbReference type="Proteomes" id="UP000002524">
    <property type="component" value="Chromosome 1"/>
</dbReference>
<dbReference type="GO" id="GO:0005737">
    <property type="term" value="C:cytoplasm"/>
    <property type="evidence" value="ECO:0007669"/>
    <property type="project" value="UniProtKB-SubCell"/>
</dbReference>
<dbReference type="GO" id="GO:0005524">
    <property type="term" value="F:ATP binding"/>
    <property type="evidence" value="ECO:0007669"/>
    <property type="project" value="UniProtKB-UniRule"/>
</dbReference>
<dbReference type="GO" id="GO:0004140">
    <property type="term" value="F:dephospho-CoA kinase activity"/>
    <property type="evidence" value="ECO:0000318"/>
    <property type="project" value="GO_Central"/>
</dbReference>
<dbReference type="GO" id="GO:0015937">
    <property type="term" value="P:coenzyme A biosynthetic process"/>
    <property type="evidence" value="ECO:0000318"/>
    <property type="project" value="GO_Central"/>
</dbReference>
<dbReference type="CDD" id="cd02022">
    <property type="entry name" value="DPCK"/>
    <property type="match status" value="1"/>
</dbReference>
<dbReference type="FunFam" id="3.40.50.300:FF:000991">
    <property type="entry name" value="Dephospho-CoA kinase"/>
    <property type="match status" value="1"/>
</dbReference>
<dbReference type="Gene3D" id="3.40.50.300">
    <property type="entry name" value="P-loop containing nucleotide triphosphate hydrolases"/>
    <property type="match status" value="1"/>
</dbReference>
<dbReference type="HAMAP" id="MF_00376">
    <property type="entry name" value="Dephospho_CoA_kinase"/>
    <property type="match status" value="1"/>
</dbReference>
<dbReference type="InterPro" id="IPR001977">
    <property type="entry name" value="Depp_CoAkinase"/>
</dbReference>
<dbReference type="InterPro" id="IPR027417">
    <property type="entry name" value="P-loop_NTPase"/>
</dbReference>
<dbReference type="NCBIfam" id="TIGR00152">
    <property type="entry name" value="dephospho-CoA kinase"/>
    <property type="match status" value="1"/>
</dbReference>
<dbReference type="PANTHER" id="PTHR10695:SF46">
    <property type="entry name" value="BIFUNCTIONAL COENZYME A SYNTHASE-RELATED"/>
    <property type="match status" value="1"/>
</dbReference>
<dbReference type="PANTHER" id="PTHR10695">
    <property type="entry name" value="DEPHOSPHO-COA KINASE-RELATED"/>
    <property type="match status" value="1"/>
</dbReference>
<dbReference type="Pfam" id="PF01121">
    <property type="entry name" value="CoaE"/>
    <property type="match status" value="1"/>
</dbReference>
<dbReference type="SUPFAM" id="SSF52540">
    <property type="entry name" value="P-loop containing nucleoside triphosphate hydrolases"/>
    <property type="match status" value="1"/>
</dbReference>
<dbReference type="PROSITE" id="PS51219">
    <property type="entry name" value="DPCK"/>
    <property type="match status" value="1"/>
</dbReference>
<name>COAE_DEIRA</name>
<accession>Q9RT73</accession>
<comment type="function">
    <text evidence="1">Catalyzes the phosphorylation of the 3'-hydroxyl group of dephosphocoenzyme A to form coenzyme A.</text>
</comment>
<comment type="catalytic activity">
    <reaction evidence="1">
        <text>3'-dephospho-CoA + ATP = ADP + CoA + H(+)</text>
        <dbReference type="Rhea" id="RHEA:18245"/>
        <dbReference type="ChEBI" id="CHEBI:15378"/>
        <dbReference type="ChEBI" id="CHEBI:30616"/>
        <dbReference type="ChEBI" id="CHEBI:57287"/>
        <dbReference type="ChEBI" id="CHEBI:57328"/>
        <dbReference type="ChEBI" id="CHEBI:456216"/>
        <dbReference type="EC" id="2.7.1.24"/>
    </reaction>
</comment>
<comment type="pathway">
    <text evidence="1">Cofactor biosynthesis; coenzyme A biosynthesis; CoA from (R)-pantothenate: step 5/5.</text>
</comment>
<comment type="subcellular location">
    <subcellularLocation>
        <location evidence="1">Cytoplasm</location>
    </subcellularLocation>
</comment>
<comment type="similarity">
    <text evidence="1 3">Belongs to the CoaE family.</text>
</comment>
<gene>
    <name evidence="1" type="primary">coaE</name>
    <name type="ordered locus">DR_1892</name>
</gene>
<reference key="1">
    <citation type="journal article" date="1999" name="Science">
        <title>Genome sequence of the radioresistant bacterium Deinococcus radiodurans R1.</title>
        <authorList>
            <person name="White O."/>
            <person name="Eisen J.A."/>
            <person name="Heidelberg J.F."/>
            <person name="Hickey E.K."/>
            <person name="Peterson J.D."/>
            <person name="Dodson R.J."/>
            <person name="Haft D.H."/>
            <person name="Gwinn M.L."/>
            <person name="Nelson W.C."/>
            <person name="Richardson D.L."/>
            <person name="Moffat K.S."/>
            <person name="Qin H."/>
            <person name="Jiang L."/>
            <person name="Pamphile W."/>
            <person name="Crosby M."/>
            <person name="Shen M."/>
            <person name="Vamathevan J.J."/>
            <person name="Lam P."/>
            <person name="McDonald L.A."/>
            <person name="Utterback T.R."/>
            <person name="Zalewski C."/>
            <person name="Makarova K.S."/>
            <person name="Aravind L."/>
            <person name="Daly M.J."/>
            <person name="Minton K.W."/>
            <person name="Fleischmann R.D."/>
            <person name="Ketchum K.A."/>
            <person name="Nelson K.E."/>
            <person name="Salzberg S.L."/>
            <person name="Smith H.O."/>
            <person name="Venter J.C."/>
            <person name="Fraser C.M."/>
        </authorList>
    </citation>
    <scope>NUCLEOTIDE SEQUENCE [LARGE SCALE GENOMIC DNA]</scope>
    <source>
        <strain>ATCC 13939 / DSM 20539 / JCM 16871 / CCUG 27074 / LMG 4051 / NBRC 15346 / NCIMB 9279 / VKM B-1422 / R1</strain>
    </source>
</reference>
<feature type="chain" id="PRO_0000172939" description="Dephospho-CoA kinase">
    <location>
        <begin position="1"/>
        <end position="207"/>
    </location>
</feature>
<feature type="domain" description="DPCK" evidence="1">
    <location>
        <begin position="15"/>
        <end position="207"/>
    </location>
</feature>
<feature type="region of interest" description="Disordered" evidence="2">
    <location>
        <begin position="1"/>
        <end position="21"/>
    </location>
</feature>
<feature type="compositionally biased region" description="Polar residues" evidence="2">
    <location>
        <begin position="1"/>
        <end position="11"/>
    </location>
</feature>
<feature type="binding site" evidence="1">
    <location>
        <begin position="23"/>
        <end position="28"/>
    </location>
    <ligand>
        <name>ATP</name>
        <dbReference type="ChEBI" id="CHEBI:30616"/>
    </ligand>
</feature>
<organism>
    <name type="scientific">Deinococcus radiodurans (strain ATCC 13939 / DSM 20539 / JCM 16871 / CCUG 27074 / LMG 4051 / NBRC 15346 / NCIMB 9279 / VKM B-1422 / R1)</name>
    <dbReference type="NCBI Taxonomy" id="243230"/>
    <lineage>
        <taxon>Bacteria</taxon>
        <taxon>Thermotogati</taxon>
        <taxon>Deinococcota</taxon>
        <taxon>Deinococci</taxon>
        <taxon>Deinococcales</taxon>
        <taxon>Deinococcaceae</taxon>
        <taxon>Deinococcus</taxon>
    </lineage>
</organism>
<evidence type="ECO:0000255" key="1">
    <source>
        <dbReference type="HAMAP-Rule" id="MF_00376"/>
    </source>
</evidence>
<evidence type="ECO:0000256" key="2">
    <source>
        <dbReference type="SAM" id="MobiDB-lite"/>
    </source>
</evidence>
<evidence type="ECO:0000305" key="3"/>
<protein>
    <recommendedName>
        <fullName evidence="1">Dephospho-CoA kinase</fullName>
        <ecNumber evidence="1">2.7.1.24</ecNumber>
    </recommendedName>
    <alternativeName>
        <fullName evidence="1">Dephosphocoenzyme A kinase</fullName>
    </alternativeName>
</protein>
<proteinExistence type="inferred from homology"/>